<feature type="chain" id="PRO_0000156295" description="Phosphopantetheine adenylyltransferase">
    <location>
        <begin position="1"/>
        <end position="159"/>
    </location>
</feature>
<feature type="binding site" evidence="1">
    <location>
        <begin position="8"/>
        <end position="9"/>
    </location>
    <ligand>
        <name>ATP</name>
        <dbReference type="ChEBI" id="CHEBI:30616"/>
    </ligand>
</feature>
<feature type="binding site" evidence="1">
    <location>
        <position position="8"/>
    </location>
    <ligand>
        <name>substrate</name>
    </ligand>
</feature>
<feature type="binding site" evidence="1">
    <location>
        <position position="16"/>
    </location>
    <ligand>
        <name>ATP</name>
        <dbReference type="ChEBI" id="CHEBI:30616"/>
    </ligand>
</feature>
<feature type="binding site" evidence="1">
    <location>
        <position position="40"/>
    </location>
    <ligand>
        <name>substrate</name>
    </ligand>
</feature>
<feature type="binding site" evidence="1">
    <location>
        <position position="72"/>
    </location>
    <ligand>
        <name>substrate</name>
    </ligand>
</feature>
<feature type="binding site" evidence="1">
    <location>
        <position position="86"/>
    </location>
    <ligand>
        <name>substrate</name>
    </ligand>
</feature>
<feature type="binding site" evidence="1">
    <location>
        <begin position="87"/>
        <end position="89"/>
    </location>
    <ligand>
        <name>ATP</name>
        <dbReference type="ChEBI" id="CHEBI:30616"/>
    </ligand>
</feature>
<feature type="binding site" evidence="1">
    <location>
        <position position="97"/>
    </location>
    <ligand>
        <name>ATP</name>
        <dbReference type="ChEBI" id="CHEBI:30616"/>
    </ligand>
</feature>
<feature type="binding site" evidence="1">
    <location>
        <begin position="122"/>
        <end position="128"/>
    </location>
    <ligand>
        <name>ATP</name>
        <dbReference type="ChEBI" id="CHEBI:30616"/>
    </ligand>
</feature>
<feature type="site" description="Transition state stabilizer" evidence="1">
    <location>
        <position position="16"/>
    </location>
</feature>
<reference key="1">
    <citation type="journal article" date="1995" name="DNA Res.">
        <title>Sequence analysis of the genome of the unicellular cyanobacterium Synechocystis sp. strain PCC6803. I. Sequence features in the 1 Mb region from map positions 64% to 92% of the genome.</title>
        <authorList>
            <person name="Kaneko T."/>
            <person name="Tanaka A."/>
            <person name="Sato S."/>
            <person name="Kotani H."/>
            <person name="Sazuka T."/>
            <person name="Miyajima N."/>
            <person name="Sugiura M."/>
            <person name="Tabata S."/>
        </authorList>
    </citation>
    <scope>NUCLEOTIDE SEQUENCE [LARGE SCALE GENOMIC DNA]</scope>
    <source>
        <strain>ATCC 27184 / PCC 6803 / N-1</strain>
    </source>
</reference>
<reference key="2">
    <citation type="journal article" date="1996" name="DNA Res.">
        <title>Sequence analysis of the genome of the unicellular cyanobacterium Synechocystis sp. strain PCC6803. II. Sequence determination of the entire genome and assignment of potential protein-coding regions.</title>
        <authorList>
            <person name="Kaneko T."/>
            <person name="Sato S."/>
            <person name="Kotani H."/>
            <person name="Tanaka A."/>
            <person name="Asamizu E."/>
            <person name="Nakamura Y."/>
            <person name="Miyajima N."/>
            <person name="Hirosawa M."/>
            <person name="Sugiura M."/>
            <person name="Sasamoto S."/>
            <person name="Kimura T."/>
            <person name="Hosouchi T."/>
            <person name="Matsuno A."/>
            <person name="Muraki A."/>
            <person name="Nakazaki N."/>
            <person name="Naruo K."/>
            <person name="Okumura S."/>
            <person name="Shimpo S."/>
            <person name="Takeuchi C."/>
            <person name="Wada T."/>
            <person name="Watanabe A."/>
            <person name="Yamada M."/>
            <person name="Yasuda M."/>
            <person name="Tabata S."/>
        </authorList>
    </citation>
    <scope>NUCLEOTIDE SEQUENCE [LARGE SCALE GENOMIC DNA]</scope>
    <source>
        <strain>ATCC 27184 / PCC 6803 / Kazusa</strain>
    </source>
</reference>
<sequence>MIAIYPGSFDPITLGHLDIIERGSGLFEQIIVAVLCNPSKQPLFSVEKRLEQIRHCTQHLTNVTVDSFNGLTVDYAKQKQATVLLRGLRVLSDFEKELQMAHTNQTLWDGVETVFLATAKEYSFLSSSIVKEIAKFGGSVDHLVPPSILADICSSYPSP</sequence>
<gene>
    <name evidence="1" type="primary">coaD</name>
    <name type="synonym">kdtB</name>
    <name type="ordered locus">slr0847</name>
</gene>
<evidence type="ECO:0000255" key="1">
    <source>
        <dbReference type="HAMAP-Rule" id="MF_00151"/>
    </source>
</evidence>
<keyword id="KW-0067">ATP-binding</keyword>
<keyword id="KW-0173">Coenzyme A biosynthesis</keyword>
<keyword id="KW-0963">Cytoplasm</keyword>
<keyword id="KW-0460">Magnesium</keyword>
<keyword id="KW-0547">Nucleotide-binding</keyword>
<keyword id="KW-0548">Nucleotidyltransferase</keyword>
<keyword id="KW-1185">Reference proteome</keyword>
<keyword id="KW-0808">Transferase</keyword>
<comment type="function">
    <text evidence="1">Reversibly transfers an adenylyl group from ATP to 4'-phosphopantetheine, yielding dephospho-CoA (dPCoA) and pyrophosphate.</text>
</comment>
<comment type="catalytic activity">
    <reaction evidence="1">
        <text>(R)-4'-phosphopantetheine + ATP + H(+) = 3'-dephospho-CoA + diphosphate</text>
        <dbReference type="Rhea" id="RHEA:19801"/>
        <dbReference type="ChEBI" id="CHEBI:15378"/>
        <dbReference type="ChEBI" id="CHEBI:30616"/>
        <dbReference type="ChEBI" id="CHEBI:33019"/>
        <dbReference type="ChEBI" id="CHEBI:57328"/>
        <dbReference type="ChEBI" id="CHEBI:61723"/>
        <dbReference type="EC" id="2.7.7.3"/>
    </reaction>
</comment>
<comment type="cofactor">
    <cofactor evidence="1">
        <name>Mg(2+)</name>
        <dbReference type="ChEBI" id="CHEBI:18420"/>
    </cofactor>
</comment>
<comment type="pathway">
    <text evidence="1">Cofactor biosynthesis; coenzyme A biosynthesis; CoA from (R)-pantothenate: step 4/5.</text>
</comment>
<comment type="subunit">
    <text evidence="1">Homohexamer.</text>
</comment>
<comment type="subcellular location">
    <subcellularLocation>
        <location evidence="1">Cytoplasm</location>
    </subcellularLocation>
</comment>
<comment type="similarity">
    <text evidence="1">Belongs to the bacterial CoaD family.</text>
</comment>
<organism>
    <name type="scientific">Synechocystis sp. (strain ATCC 27184 / PCC 6803 / Kazusa)</name>
    <dbReference type="NCBI Taxonomy" id="1111708"/>
    <lineage>
        <taxon>Bacteria</taxon>
        <taxon>Bacillati</taxon>
        <taxon>Cyanobacteriota</taxon>
        <taxon>Cyanophyceae</taxon>
        <taxon>Synechococcales</taxon>
        <taxon>Merismopediaceae</taxon>
        <taxon>Synechocystis</taxon>
    </lineage>
</organism>
<name>COAD_SYNY3</name>
<proteinExistence type="inferred from homology"/>
<protein>
    <recommendedName>
        <fullName evidence="1">Phosphopantetheine adenylyltransferase</fullName>
        <ecNumber evidence="1">2.7.7.3</ecNumber>
    </recommendedName>
    <alternativeName>
        <fullName evidence="1">Dephospho-CoA pyrophosphorylase</fullName>
    </alternativeName>
    <alternativeName>
        <fullName evidence="1">Pantetheine-phosphate adenylyltransferase</fullName>
        <shortName evidence="1">PPAT</shortName>
    </alternativeName>
</protein>
<dbReference type="EC" id="2.7.7.3" evidence="1"/>
<dbReference type="EMBL" id="BA000022">
    <property type="protein sequence ID" value="BAA10537.1"/>
    <property type="molecule type" value="Genomic_DNA"/>
</dbReference>
<dbReference type="PIR" id="S75802">
    <property type="entry name" value="S75802"/>
</dbReference>
<dbReference type="SMR" id="Q55435"/>
<dbReference type="FunCoup" id="Q55435">
    <property type="interactions" value="413"/>
</dbReference>
<dbReference type="STRING" id="1148.gene:10500041"/>
<dbReference type="PaxDb" id="1148-1673325"/>
<dbReference type="EnsemblBacteria" id="BAA10537">
    <property type="protein sequence ID" value="BAA10537"/>
    <property type="gene ID" value="BAA10537"/>
</dbReference>
<dbReference type="KEGG" id="syn:slr0847"/>
<dbReference type="eggNOG" id="COG0669">
    <property type="taxonomic scope" value="Bacteria"/>
</dbReference>
<dbReference type="InParanoid" id="Q55435"/>
<dbReference type="PhylomeDB" id="Q55435"/>
<dbReference type="UniPathway" id="UPA00241">
    <property type="reaction ID" value="UER00355"/>
</dbReference>
<dbReference type="Proteomes" id="UP000001425">
    <property type="component" value="Chromosome"/>
</dbReference>
<dbReference type="GO" id="GO:0005737">
    <property type="term" value="C:cytoplasm"/>
    <property type="evidence" value="ECO:0007669"/>
    <property type="project" value="UniProtKB-SubCell"/>
</dbReference>
<dbReference type="GO" id="GO:0005524">
    <property type="term" value="F:ATP binding"/>
    <property type="evidence" value="ECO:0007669"/>
    <property type="project" value="UniProtKB-KW"/>
</dbReference>
<dbReference type="GO" id="GO:0004595">
    <property type="term" value="F:pantetheine-phosphate adenylyltransferase activity"/>
    <property type="evidence" value="ECO:0000318"/>
    <property type="project" value="GO_Central"/>
</dbReference>
<dbReference type="GO" id="GO:0015937">
    <property type="term" value="P:coenzyme A biosynthetic process"/>
    <property type="evidence" value="ECO:0000318"/>
    <property type="project" value="GO_Central"/>
</dbReference>
<dbReference type="CDD" id="cd02163">
    <property type="entry name" value="PPAT"/>
    <property type="match status" value="1"/>
</dbReference>
<dbReference type="Gene3D" id="3.40.50.620">
    <property type="entry name" value="HUPs"/>
    <property type="match status" value="1"/>
</dbReference>
<dbReference type="HAMAP" id="MF_00151">
    <property type="entry name" value="PPAT_bact"/>
    <property type="match status" value="1"/>
</dbReference>
<dbReference type="InterPro" id="IPR004821">
    <property type="entry name" value="Cyt_trans-like"/>
</dbReference>
<dbReference type="InterPro" id="IPR001980">
    <property type="entry name" value="PPAT"/>
</dbReference>
<dbReference type="InterPro" id="IPR014729">
    <property type="entry name" value="Rossmann-like_a/b/a_fold"/>
</dbReference>
<dbReference type="NCBIfam" id="TIGR01510">
    <property type="entry name" value="coaD_prev_kdtB"/>
    <property type="match status" value="1"/>
</dbReference>
<dbReference type="NCBIfam" id="TIGR00125">
    <property type="entry name" value="cyt_tran_rel"/>
    <property type="match status" value="1"/>
</dbReference>
<dbReference type="PANTHER" id="PTHR21342">
    <property type="entry name" value="PHOSPHOPANTETHEINE ADENYLYLTRANSFERASE"/>
    <property type="match status" value="1"/>
</dbReference>
<dbReference type="PANTHER" id="PTHR21342:SF1">
    <property type="entry name" value="PHOSPHOPANTETHEINE ADENYLYLTRANSFERASE"/>
    <property type="match status" value="1"/>
</dbReference>
<dbReference type="Pfam" id="PF01467">
    <property type="entry name" value="CTP_transf_like"/>
    <property type="match status" value="1"/>
</dbReference>
<dbReference type="PRINTS" id="PR01020">
    <property type="entry name" value="LPSBIOSNTHSS"/>
</dbReference>
<dbReference type="SUPFAM" id="SSF52374">
    <property type="entry name" value="Nucleotidylyl transferase"/>
    <property type="match status" value="1"/>
</dbReference>
<accession>Q55435</accession>